<accession>P0CQ95</accession>
<accession>Q55KZ7</accession>
<accession>Q5KAI2</accession>
<protein>
    <recommendedName>
        <fullName>ATP-dependent RNA helicase DBP7</fullName>
        <ecNumber>3.6.4.13</ecNumber>
    </recommendedName>
</protein>
<comment type="function">
    <text evidence="1">ATP-binding RNA helicase involved in the biogenesis of 60S ribosomal subunits and is required for the normal formation of 25S and 5.8S rRNAs.</text>
</comment>
<comment type="catalytic activity">
    <reaction>
        <text>ATP + H2O = ADP + phosphate + H(+)</text>
        <dbReference type="Rhea" id="RHEA:13065"/>
        <dbReference type="ChEBI" id="CHEBI:15377"/>
        <dbReference type="ChEBI" id="CHEBI:15378"/>
        <dbReference type="ChEBI" id="CHEBI:30616"/>
        <dbReference type="ChEBI" id="CHEBI:43474"/>
        <dbReference type="ChEBI" id="CHEBI:456216"/>
        <dbReference type="EC" id="3.6.4.13"/>
    </reaction>
</comment>
<comment type="subcellular location">
    <subcellularLocation>
        <location evidence="1">Nucleus</location>
        <location evidence="1">Nucleolus</location>
    </subcellularLocation>
</comment>
<comment type="domain">
    <text>The Q motif is unique to and characteristic of the DEAD box family of RNA helicases and controls ATP binding and hydrolysis.</text>
</comment>
<comment type="similarity">
    <text evidence="5">Belongs to the DEAD box helicase family. DDX31/DBP7 subfamily.</text>
</comment>
<feature type="chain" id="PRO_0000410258" description="ATP-dependent RNA helicase DBP7">
    <location>
        <begin position="1"/>
        <end position="948"/>
    </location>
</feature>
<feature type="domain" description="Helicase ATP-binding" evidence="2">
    <location>
        <begin position="250"/>
        <end position="476"/>
    </location>
</feature>
<feature type="domain" description="Helicase C-terminal" evidence="3">
    <location>
        <begin position="597"/>
        <end position="757"/>
    </location>
</feature>
<feature type="region of interest" description="Disordered" evidence="4">
    <location>
        <begin position="43"/>
        <end position="160"/>
    </location>
</feature>
<feature type="region of interest" description="Disordered" evidence="4">
    <location>
        <begin position="583"/>
        <end position="626"/>
    </location>
</feature>
<feature type="region of interest" description="Disordered" evidence="4">
    <location>
        <begin position="844"/>
        <end position="929"/>
    </location>
</feature>
<feature type="short sequence motif" description="Q motif">
    <location>
        <begin position="200"/>
        <end position="229"/>
    </location>
</feature>
<feature type="short sequence motif" description="DEAD box">
    <location>
        <begin position="397"/>
        <end position="400"/>
    </location>
</feature>
<feature type="compositionally biased region" description="Polar residues" evidence="4">
    <location>
        <begin position="50"/>
        <end position="62"/>
    </location>
</feature>
<feature type="compositionally biased region" description="Polar residues" evidence="4">
    <location>
        <begin position="77"/>
        <end position="89"/>
    </location>
</feature>
<feature type="compositionally biased region" description="Acidic residues" evidence="4">
    <location>
        <begin position="593"/>
        <end position="604"/>
    </location>
</feature>
<feature type="compositionally biased region" description="Basic and acidic residues" evidence="4">
    <location>
        <begin position="605"/>
        <end position="616"/>
    </location>
</feature>
<feature type="compositionally biased region" description="Basic and acidic residues" evidence="4">
    <location>
        <begin position="878"/>
        <end position="899"/>
    </location>
</feature>
<feature type="binding site" evidence="2">
    <location>
        <begin position="263"/>
        <end position="270"/>
    </location>
    <ligand>
        <name>ATP</name>
        <dbReference type="ChEBI" id="CHEBI:30616"/>
    </ligand>
</feature>
<reference key="1">
    <citation type="journal article" date="2005" name="Science">
        <title>The genome of the basidiomycetous yeast and human pathogen Cryptococcus neoformans.</title>
        <authorList>
            <person name="Loftus B.J."/>
            <person name="Fung E."/>
            <person name="Roncaglia P."/>
            <person name="Rowley D."/>
            <person name="Amedeo P."/>
            <person name="Bruno D."/>
            <person name="Vamathevan J."/>
            <person name="Miranda M."/>
            <person name="Anderson I.J."/>
            <person name="Fraser J.A."/>
            <person name="Allen J.E."/>
            <person name="Bosdet I.E."/>
            <person name="Brent M.R."/>
            <person name="Chiu R."/>
            <person name="Doering T.L."/>
            <person name="Donlin M.J."/>
            <person name="D'Souza C.A."/>
            <person name="Fox D.S."/>
            <person name="Grinberg V."/>
            <person name="Fu J."/>
            <person name="Fukushima M."/>
            <person name="Haas B.J."/>
            <person name="Huang J.C."/>
            <person name="Janbon G."/>
            <person name="Jones S.J.M."/>
            <person name="Koo H.L."/>
            <person name="Krzywinski M.I."/>
            <person name="Kwon-Chung K.J."/>
            <person name="Lengeler K.B."/>
            <person name="Maiti R."/>
            <person name="Marra M.A."/>
            <person name="Marra R.E."/>
            <person name="Mathewson C.A."/>
            <person name="Mitchell T.G."/>
            <person name="Pertea M."/>
            <person name="Riggs F.R."/>
            <person name="Salzberg S.L."/>
            <person name="Schein J.E."/>
            <person name="Shvartsbeyn A."/>
            <person name="Shin H."/>
            <person name="Shumway M."/>
            <person name="Specht C.A."/>
            <person name="Suh B.B."/>
            <person name="Tenney A."/>
            <person name="Utterback T.R."/>
            <person name="Wickes B.L."/>
            <person name="Wortman J.R."/>
            <person name="Wye N.H."/>
            <person name="Kronstad J.W."/>
            <person name="Lodge J.K."/>
            <person name="Heitman J."/>
            <person name="Davis R.W."/>
            <person name="Fraser C.M."/>
            <person name="Hyman R.W."/>
        </authorList>
    </citation>
    <scope>NUCLEOTIDE SEQUENCE [LARGE SCALE GENOMIC DNA]</scope>
    <source>
        <strain>B-3501A</strain>
    </source>
</reference>
<dbReference type="EC" id="3.6.4.13"/>
<dbReference type="EMBL" id="AAEY01000049">
    <property type="protein sequence ID" value="EAL18545.1"/>
    <property type="molecule type" value="Genomic_DNA"/>
</dbReference>
<dbReference type="RefSeq" id="XP_773192.1">
    <property type="nucleotide sequence ID" value="XM_768099.1"/>
</dbReference>
<dbReference type="SMR" id="P0CQ95"/>
<dbReference type="EnsemblFungi" id="AAW45820">
    <property type="protein sequence ID" value="AAW45820"/>
    <property type="gene ID" value="CNJ01590"/>
</dbReference>
<dbReference type="GeneID" id="4938530"/>
<dbReference type="KEGG" id="cnb:CNBJ1870"/>
<dbReference type="VEuPathDB" id="FungiDB:CNBJ1870"/>
<dbReference type="HOGENOM" id="CLU_003041_26_2_1"/>
<dbReference type="OrthoDB" id="8589at5206"/>
<dbReference type="GO" id="GO:0005730">
    <property type="term" value="C:nucleolus"/>
    <property type="evidence" value="ECO:0007669"/>
    <property type="project" value="UniProtKB-SubCell"/>
</dbReference>
<dbReference type="GO" id="GO:0005524">
    <property type="term" value="F:ATP binding"/>
    <property type="evidence" value="ECO:0007669"/>
    <property type="project" value="UniProtKB-KW"/>
</dbReference>
<dbReference type="GO" id="GO:0016887">
    <property type="term" value="F:ATP hydrolysis activity"/>
    <property type="evidence" value="ECO:0007669"/>
    <property type="project" value="RHEA"/>
</dbReference>
<dbReference type="GO" id="GO:0003723">
    <property type="term" value="F:RNA binding"/>
    <property type="evidence" value="ECO:0007669"/>
    <property type="project" value="UniProtKB-KW"/>
</dbReference>
<dbReference type="GO" id="GO:0003724">
    <property type="term" value="F:RNA helicase activity"/>
    <property type="evidence" value="ECO:0007669"/>
    <property type="project" value="UniProtKB-EC"/>
</dbReference>
<dbReference type="GO" id="GO:0006364">
    <property type="term" value="P:rRNA processing"/>
    <property type="evidence" value="ECO:0007669"/>
    <property type="project" value="UniProtKB-KW"/>
</dbReference>
<dbReference type="CDD" id="cd18787">
    <property type="entry name" value="SF2_C_DEAD"/>
    <property type="match status" value="1"/>
</dbReference>
<dbReference type="Gene3D" id="3.40.50.300">
    <property type="entry name" value="P-loop containing nucleotide triphosphate hydrolases"/>
    <property type="match status" value="2"/>
</dbReference>
<dbReference type="InterPro" id="IPR011545">
    <property type="entry name" value="DEAD/DEAH_box_helicase_dom"/>
</dbReference>
<dbReference type="InterPro" id="IPR014001">
    <property type="entry name" value="Helicase_ATP-bd"/>
</dbReference>
<dbReference type="InterPro" id="IPR001650">
    <property type="entry name" value="Helicase_C-like"/>
</dbReference>
<dbReference type="InterPro" id="IPR027417">
    <property type="entry name" value="P-loop_NTPase"/>
</dbReference>
<dbReference type="InterPro" id="IPR000629">
    <property type="entry name" value="RNA-helicase_DEAD-box_CS"/>
</dbReference>
<dbReference type="InterPro" id="IPR014014">
    <property type="entry name" value="RNA_helicase_DEAD_Q_motif"/>
</dbReference>
<dbReference type="InterPro" id="IPR025313">
    <property type="entry name" value="SPB4-like_CTE"/>
</dbReference>
<dbReference type="PANTHER" id="PTHR24031">
    <property type="entry name" value="RNA HELICASE"/>
    <property type="match status" value="1"/>
</dbReference>
<dbReference type="Pfam" id="PF13959">
    <property type="entry name" value="CTE_SPB4"/>
    <property type="match status" value="1"/>
</dbReference>
<dbReference type="Pfam" id="PF00270">
    <property type="entry name" value="DEAD"/>
    <property type="match status" value="1"/>
</dbReference>
<dbReference type="Pfam" id="PF00271">
    <property type="entry name" value="Helicase_C"/>
    <property type="match status" value="1"/>
</dbReference>
<dbReference type="SMART" id="SM00487">
    <property type="entry name" value="DEXDc"/>
    <property type="match status" value="1"/>
</dbReference>
<dbReference type="SMART" id="SM01178">
    <property type="entry name" value="DUF4217"/>
    <property type="match status" value="1"/>
</dbReference>
<dbReference type="SMART" id="SM00490">
    <property type="entry name" value="HELICc"/>
    <property type="match status" value="1"/>
</dbReference>
<dbReference type="SUPFAM" id="SSF52540">
    <property type="entry name" value="P-loop containing nucleoside triphosphate hydrolases"/>
    <property type="match status" value="2"/>
</dbReference>
<dbReference type="PROSITE" id="PS00039">
    <property type="entry name" value="DEAD_ATP_HELICASE"/>
    <property type="match status" value="1"/>
</dbReference>
<dbReference type="PROSITE" id="PS51192">
    <property type="entry name" value="HELICASE_ATP_BIND_1"/>
    <property type="match status" value="1"/>
</dbReference>
<dbReference type="PROSITE" id="PS51194">
    <property type="entry name" value="HELICASE_CTER"/>
    <property type="match status" value="1"/>
</dbReference>
<dbReference type="PROSITE" id="PS51195">
    <property type="entry name" value="Q_MOTIF"/>
    <property type="match status" value="1"/>
</dbReference>
<sequence length="948" mass="102839">MADDIELNFAVPASGLVRQVAPKKGGRWTDRVRAKREARDAFKSMKANHLTVQNPSMPTVSASELVPKPAVIKPAPTSASVSRHPQPKSQVVAPPRFTNATAGPSRPAPSPQAASSNVPKSASIPAPATIKHRTSLPTNAFERPPLPPQAGPSRPHPAEKLKTPQFISSLFTSAPLPGVKSSVAPEISTGAPSNAPVDTTTFQGLGLNKLLINHLKGKMGVEKPTGIQRNCLPYMLSSPLNPDKKAGDEGPKEEPLRDVLIQAQTGSGKTLSYLLPIVQTLLPLSRLSYIDRSIGTLAIILAPTRELAQQISKVLEQLLHMSFAASKEGSDDEDEDDRPFTRWLVSGLLTGGSTRTHEKAKLRKGVPILVSTPGRLLDHLQNTMSFQCAKTMFLVLDEADRLMDLGFEETIQGIIKALEGRRRNEINIEKEMDKEGGGTMRWPFWDRGRLNVLCSATVDAKVERLAGAALRDPVLFRSEKDEAEAKKKAEGKDDAVIKALNEAQAIVIPQESEEKFTPPSQLSQKYVVLPTKLRLVALVALLRSLISSVAKGISVSNGTKVIVFLSSTDAVDFHWKLLGGVQMGQQGQQADGEKEEDEEEEGESVEERESDGESKAKKSKRKAKSKSTDDIVSLASPLFPNTTLHRLHGSLPLRTRLASLKAFATSSSQPSVLFATSVASRGLDLPLVRAVVQYDLPTEGGANEYVHRVGRTARAGKGGEAWAFVSPSEEGWVKWIEGKMGAAEGKSGVNLGQVGVEDVLRKGFGGKSYEYEARATDVQLSFENWVLASEQNAALARKAFASFVRAYSTHPLEEKQFFHTKLLHLGHLAKSFALREAPAQLASALSAGKSKRPKSKAASSATHPGKRKRDEDEDEMEERGGKELTARNETERRMYEAVRKQGRTIKSGGKLGEFSGKGQNKGQKAAATGGEFHIVNTGELERLVARRK</sequence>
<evidence type="ECO:0000250" key="1"/>
<evidence type="ECO:0000255" key="2">
    <source>
        <dbReference type="PROSITE-ProRule" id="PRU00541"/>
    </source>
</evidence>
<evidence type="ECO:0000255" key="3">
    <source>
        <dbReference type="PROSITE-ProRule" id="PRU00542"/>
    </source>
</evidence>
<evidence type="ECO:0000256" key="4">
    <source>
        <dbReference type="SAM" id="MobiDB-lite"/>
    </source>
</evidence>
<evidence type="ECO:0000305" key="5"/>
<proteinExistence type="inferred from homology"/>
<keyword id="KW-0067">ATP-binding</keyword>
<keyword id="KW-0347">Helicase</keyword>
<keyword id="KW-0378">Hydrolase</keyword>
<keyword id="KW-0547">Nucleotide-binding</keyword>
<keyword id="KW-0539">Nucleus</keyword>
<keyword id="KW-0690">Ribosome biogenesis</keyword>
<keyword id="KW-0694">RNA-binding</keyword>
<keyword id="KW-0698">rRNA processing</keyword>
<name>DBP7_CRYNB</name>
<organism>
    <name type="scientific">Cryptococcus neoformans var. neoformans serotype D (strain B-3501A)</name>
    <name type="common">Filobasidiella neoformans</name>
    <dbReference type="NCBI Taxonomy" id="283643"/>
    <lineage>
        <taxon>Eukaryota</taxon>
        <taxon>Fungi</taxon>
        <taxon>Dikarya</taxon>
        <taxon>Basidiomycota</taxon>
        <taxon>Agaricomycotina</taxon>
        <taxon>Tremellomycetes</taxon>
        <taxon>Tremellales</taxon>
        <taxon>Cryptococcaceae</taxon>
        <taxon>Cryptococcus</taxon>
        <taxon>Cryptococcus neoformans species complex</taxon>
    </lineage>
</organism>
<gene>
    <name type="primary">DBP7</name>
    <name type="ordered locus">CNBJ1870</name>
</gene>